<feature type="chain" id="PRO_0000360063" description="SPbeta prophage-derived uncharacterized protein YomO">
    <location>
        <begin position="1"/>
        <end position="166"/>
    </location>
</feature>
<protein>
    <recommendedName>
        <fullName>SPbeta prophage-derived uncharacterized protein YomO</fullName>
    </recommendedName>
</protein>
<gene>
    <name type="primary">yomO</name>
    <name type="ordered locus">BSU21280</name>
</gene>
<proteinExistence type="predicted"/>
<sequence length="166" mass="19204">MASKKLNLSLIEESVNKYDKKEKVQLTDDVHVFIYPYFSPSRLTKMLTEMISDQQKAEDKGIDFSKINTVQWVFFSIVKEFSDLGIPNDIKNKVKWYLKLVDSEFFPMIINSFPKESMKKLKDATKALEKITEDLLTMSHQEINKLILEKVEEIETGSGEVSGENN</sequence>
<dbReference type="EMBL" id="AL009126">
    <property type="protein sequence ID" value="CAB14046.1"/>
    <property type="molecule type" value="Genomic_DNA"/>
</dbReference>
<dbReference type="RefSeq" id="NP_390011.1">
    <property type="nucleotide sequence ID" value="NC_000964.3"/>
</dbReference>
<dbReference type="RefSeq" id="WP_004399471.1">
    <property type="nucleotide sequence ID" value="NZ_OZ025638.1"/>
</dbReference>
<dbReference type="SMR" id="O31969"/>
<dbReference type="FunCoup" id="O31969">
    <property type="interactions" value="68"/>
</dbReference>
<dbReference type="STRING" id="224308.BSU21280"/>
<dbReference type="PaxDb" id="224308-BSU21280"/>
<dbReference type="DNASU" id="939140"/>
<dbReference type="EnsemblBacteria" id="CAB14046">
    <property type="protein sequence ID" value="CAB14046"/>
    <property type="gene ID" value="BSU_21280"/>
</dbReference>
<dbReference type="GeneID" id="939140"/>
<dbReference type="KEGG" id="bsu:BSU21280"/>
<dbReference type="PATRIC" id="fig|224308.179.peg.2323"/>
<dbReference type="eggNOG" id="ENOG50329U8">
    <property type="taxonomic scope" value="Bacteria"/>
</dbReference>
<dbReference type="InParanoid" id="O31969"/>
<dbReference type="OrthoDB" id="2916470at2"/>
<dbReference type="BioCyc" id="BSUB:BSU21280-MONOMER"/>
<dbReference type="Proteomes" id="UP000001570">
    <property type="component" value="Chromosome"/>
</dbReference>
<organism>
    <name type="scientific">Bacillus subtilis (strain 168)</name>
    <dbReference type="NCBI Taxonomy" id="224308"/>
    <lineage>
        <taxon>Bacteria</taxon>
        <taxon>Bacillati</taxon>
        <taxon>Bacillota</taxon>
        <taxon>Bacilli</taxon>
        <taxon>Bacillales</taxon>
        <taxon>Bacillaceae</taxon>
        <taxon>Bacillus</taxon>
    </lineage>
</organism>
<name>YOMO_BACSU</name>
<accession>O31969</accession>
<keyword id="KW-1185">Reference proteome</keyword>
<reference key="1">
    <citation type="journal article" date="1997" name="Nature">
        <title>The complete genome sequence of the Gram-positive bacterium Bacillus subtilis.</title>
        <authorList>
            <person name="Kunst F."/>
            <person name="Ogasawara N."/>
            <person name="Moszer I."/>
            <person name="Albertini A.M."/>
            <person name="Alloni G."/>
            <person name="Azevedo V."/>
            <person name="Bertero M.G."/>
            <person name="Bessieres P."/>
            <person name="Bolotin A."/>
            <person name="Borchert S."/>
            <person name="Borriss R."/>
            <person name="Boursier L."/>
            <person name="Brans A."/>
            <person name="Braun M."/>
            <person name="Brignell S.C."/>
            <person name="Bron S."/>
            <person name="Brouillet S."/>
            <person name="Bruschi C.V."/>
            <person name="Caldwell B."/>
            <person name="Capuano V."/>
            <person name="Carter N.M."/>
            <person name="Choi S.-K."/>
            <person name="Codani J.-J."/>
            <person name="Connerton I.F."/>
            <person name="Cummings N.J."/>
            <person name="Daniel R.A."/>
            <person name="Denizot F."/>
            <person name="Devine K.M."/>
            <person name="Duesterhoeft A."/>
            <person name="Ehrlich S.D."/>
            <person name="Emmerson P.T."/>
            <person name="Entian K.-D."/>
            <person name="Errington J."/>
            <person name="Fabret C."/>
            <person name="Ferrari E."/>
            <person name="Foulger D."/>
            <person name="Fritz C."/>
            <person name="Fujita M."/>
            <person name="Fujita Y."/>
            <person name="Fuma S."/>
            <person name="Galizzi A."/>
            <person name="Galleron N."/>
            <person name="Ghim S.-Y."/>
            <person name="Glaser P."/>
            <person name="Goffeau A."/>
            <person name="Golightly E.J."/>
            <person name="Grandi G."/>
            <person name="Guiseppi G."/>
            <person name="Guy B.J."/>
            <person name="Haga K."/>
            <person name="Haiech J."/>
            <person name="Harwood C.R."/>
            <person name="Henaut A."/>
            <person name="Hilbert H."/>
            <person name="Holsappel S."/>
            <person name="Hosono S."/>
            <person name="Hullo M.-F."/>
            <person name="Itaya M."/>
            <person name="Jones L.-M."/>
            <person name="Joris B."/>
            <person name="Karamata D."/>
            <person name="Kasahara Y."/>
            <person name="Klaerr-Blanchard M."/>
            <person name="Klein C."/>
            <person name="Kobayashi Y."/>
            <person name="Koetter P."/>
            <person name="Koningstein G."/>
            <person name="Krogh S."/>
            <person name="Kumano M."/>
            <person name="Kurita K."/>
            <person name="Lapidus A."/>
            <person name="Lardinois S."/>
            <person name="Lauber J."/>
            <person name="Lazarevic V."/>
            <person name="Lee S.-M."/>
            <person name="Levine A."/>
            <person name="Liu H."/>
            <person name="Masuda S."/>
            <person name="Mauel C."/>
            <person name="Medigue C."/>
            <person name="Medina N."/>
            <person name="Mellado R.P."/>
            <person name="Mizuno M."/>
            <person name="Moestl D."/>
            <person name="Nakai S."/>
            <person name="Noback M."/>
            <person name="Noone D."/>
            <person name="O'Reilly M."/>
            <person name="Ogawa K."/>
            <person name="Ogiwara A."/>
            <person name="Oudega B."/>
            <person name="Park S.-H."/>
            <person name="Parro V."/>
            <person name="Pohl T.M."/>
            <person name="Portetelle D."/>
            <person name="Porwollik S."/>
            <person name="Prescott A.M."/>
            <person name="Presecan E."/>
            <person name="Pujic P."/>
            <person name="Purnelle B."/>
            <person name="Rapoport G."/>
            <person name="Rey M."/>
            <person name="Reynolds S."/>
            <person name="Rieger M."/>
            <person name="Rivolta C."/>
            <person name="Rocha E."/>
            <person name="Roche B."/>
            <person name="Rose M."/>
            <person name="Sadaie Y."/>
            <person name="Sato T."/>
            <person name="Scanlan E."/>
            <person name="Schleich S."/>
            <person name="Schroeter R."/>
            <person name="Scoffone F."/>
            <person name="Sekiguchi J."/>
            <person name="Sekowska A."/>
            <person name="Seror S.J."/>
            <person name="Serror P."/>
            <person name="Shin B.-S."/>
            <person name="Soldo B."/>
            <person name="Sorokin A."/>
            <person name="Tacconi E."/>
            <person name="Takagi T."/>
            <person name="Takahashi H."/>
            <person name="Takemaru K."/>
            <person name="Takeuchi M."/>
            <person name="Tamakoshi A."/>
            <person name="Tanaka T."/>
            <person name="Terpstra P."/>
            <person name="Tognoni A."/>
            <person name="Tosato V."/>
            <person name="Uchiyama S."/>
            <person name="Vandenbol M."/>
            <person name="Vannier F."/>
            <person name="Vassarotti A."/>
            <person name="Viari A."/>
            <person name="Wambutt R."/>
            <person name="Wedler E."/>
            <person name="Wedler H."/>
            <person name="Weitzenegger T."/>
            <person name="Winters P."/>
            <person name="Wipat A."/>
            <person name="Yamamoto H."/>
            <person name="Yamane K."/>
            <person name="Yasumoto K."/>
            <person name="Yata K."/>
            <person name="Yoshida K."/>
            <person name="Yoshikawa H.-F."/>
            <person name="Zumstein E."/>
            <person name="Yoshikawa H."/>
            <person name="Danchin A."/>
        </authorList>
    </citation>
    <scope>NUCLEOTIDE SEQUENCE [LARGE SCALE GENOMIC DNA]</scope>
    <source>
        <strain>168</strain>
    </source>
</reference>